<organism>
    <name type="scientific">Cellvibrio japonicus (strain Ueda107)</name>
    <name type="common">Pseudomonas fluorescens subsp. cellulosa</name>
    <dbReference type="NCBI Taxonomy" id="498211"/>
    <lineage>
        <taxon>Bacteria</taxon>
        <taxon>Pseudomonadati</taxon>
        <taxon>Pseudomonadota</taxon>
        <taxon>Gammaproteobacteria</taxon>
        <taxon>Cellvibrionales</taxon>
        <taxon>Cellvibrionaceae</taxon>
        <taxon>Cellvibrio</taxon>
    </lineage>
</organism>
<keyword id="KW-0997">Cell inner membrane</keyword>
<keyword id="KW-1003">Cell membrane</keyword>
<keyword id="KW-0378">Hydrolase</keyword>
<keyword id="KW-0441">Lipid A biosynthesis</keyword>
<keyword id="KW-0444">Lipid biosynthesis</keyword>
<keyword id="KW-0443">Lipid metabolism</keyword>
<keyword id="KW-0464">Manganese</keyword>
<keyword id="KW-0472">Membrane</keyword>
<keyword id="KW-0479">Metal-binding</keyword>
<keyword id="KW-1185">Reference proteome</keyword>
<accession>B3PHJ5</accession>
<proteinExistence type="inferred from homology"/>
<comment type="function">
    <text evidence="1">Hydrolyzes the pyrophosphate bond of UDP-2,3-diacylglucosamine to yield 2,3-diacylglucosamine 1-phosphate (lipid X) and UMP by catalyzing the attack of water at the alpha-P atom. Involved in the biosynthesis of lipid A, a phosphorylated glycolipid that anchors the lipopolysaccharide to the outer membrane of the cell.</text>
</comment>
<comment type="catalytic activity">
    <reaction evidence="1">
        <text>UDP-2-N,3-O-bis[(3R)-3-hydroxytetradecanoyl]-alpha-D-glucosamine + H2O = 2-N,3-O-bis[(3R)-3-hydroxytetradecanoyl]-alpha-D-glucosaminyl 1-phosphate + UMP + 2 H(+)</text>
        <dbReference type="Rhea" id="RHEA:25213"/>
        <dbReference type="ChEBI" id="CHEBI:15377"/>
        <dbReference type="ChEBI" id="CHEBI:15378"/>
        <dbReference type="ChEBI" id="CHEBI:57865"/>
        <dbReference type="ChEBI" id="CHEBI:57957"/>
        <dbReference type="ChEBI" id="CHEBI:78847"/>
        <dbReference type="EC" id="3.6.1.54"/>
    </reaction>
</comment>
<comment type="cofactor">
    <cofactor evidence="1">
        <name>Mn(2+)</name>
        <dbReference type="ChEBI" id="CHEBI:29035"/>
    </cofactor>
    <text evidence="1">Binds 2 Mn(2+) ions per subunit in a binuclear metal center.</text>
</comment>
<comment type="pathway">
    <text evidence="1">Glycolipid biosynthesis; lipid IV(A) biosynthesis; lipid IV(A) from (3R)-3-hydroxytetradecanoyl-[acyl-carrier-protein] and UDP-N-acetyl-alpha-D-glucosamine: step 4/6.</text>
</comment>
<comment type="subcellular location">
    <subcellularLocation>
        <location evidence="1">Cell inner membrane</location>
        <topology evidence="1">Peripheral membrane protein</topology>
        <orientation evidence="1">Cytoplasmic side</orientation>
    </subcellularLocation>
</comment>
<comment type="similarity">
    <text evidence="1">Belongs to the LpxH family.</text>
</comment>
<evidence type="ECO:0000255" key="1">
    <source>
        <dbReference type="HAMAP-Rule" id="MF_00575"/>
    </source>
</evidence>
<reference key="1">
    <citation type="journal article" date="2008" name="J. Bacteriol.">
        <title>Insights into plant cell wall degradation from the genome sequence of the soil bacterium Cellvibrio japonicus.</title>
        <authorList>
            <person name="DeBoy R.T."/>
            <person name="Mongodin E.F."/>
            <person name="Fouts D.E."/>
            <person name="Tailford L.E."/>
            <person name="Khouri H."/>
            <person name="Emerson J.B."/>
            <person name="Mohamoud Y."/>
            <person name="Watkins K."/>
            <person name="Henrissat B."/>
            <person name="Gilbert H.J."/>
            <person name="Nelson K.E."/>
        </authorList>
    </citation>
    <scope>NUCLEOTIDE SEQUENCE [LARGE SCALE GENOMIC DNA]</scope>
    <source>
        <strain>Ueda107</strain>
    </source>
</reference>
<protein>
    <recommendedName>
        <fullName evidence="1">UDP-2,3-diacylglucosamine hydrolase</fullName>
        <ecNumber evidence="1">3.6.1.54</ecNumber>
    </recommendedName>
    <alternativeName>
        <fullName evidence="1">UDP-2,3-diacylglucosamine diphosphatase</fullName>
    </alternativeName>
</protein>
<name>LPXH_CELJU</name>
<sequence length="240" mass="26872">MNTLFISDLHLHSSRPQITRAFFDFLRQQTHHTQALYILGDFFDAWIGDDDDDPLPNAVAEQLKKLNSAGVAIFLMHGNRDFLLGNSYAQRAGATLIAEGTVIDLYGRPALLLHGDDLCTLDTDYMAFRQQVRNPDWQAQLLAQPLAARRALAAQLRAQSQAINNMKAESIMDVTPDEVVRVMEEAGVDLLIHGHTHRPARHPLTVQGRPAERIVLGDWHHQGWCLDASATGLALRNWDI</sequence>
<feature type="chain" id="PRO_1000129515" description="UDP-2,3-diacylglucosamine hydrolase">
    <location>
        <begin position="1"/>
        <end position="240"/>
    </location>
</feature>
<feature type="binding site" evidence="1">
    <location>
        <position position="8"/>
    </location>
    <ligand>
        <name>Mn(2+)</name>
        <dbReference type="ChEBI" id="CHEBI:29035"/>
        <label>1</label>
    </ligand>
</feature>
<feature type="binding site" evidence="1">
    <location>
        <position position="10"/>
    </location>
    <ligand>
        <name>Mn(2+)</name>
        <dbReference type="ChEBI" id="CHEBI:29035"/>
        <label>1</label>
    </ligand>
</feature>
<feature type="binding site" evidence="1">
    <location>
        <position position="41"/>
    </location>
    <ligand>
        <name>Mn(2+)</name>
        <dbReference type="ChEBI" id="CHEBI:29035"/>
        <label>1</label>
    </ligand>
</feature>
<feature type="binding site" evidence="1">
    <location>
        <position position="41"/>
    </location>
    <ligand>
        <name>Mn(2+)</name>
        <dbReference type="ChEBI" id="CHEBI:29035"/>
        <label>2</label>
    </ligand>
</feature>
<feature type="binding site" evidence="1">
    <location>
        <begin position="79"/>
        <end position="80"/>
    </location>
    <ligand>
        <name>substrate</name>
    </ligand>
</feature>
<feature type="binding site" evidence="1">
    <location>
        <position position="79"/>
    </location>
    <ligand>
        <name>Mn(2+)</name>
        <dbReference type="ChEBI" id="CHEBI:29035"/>
        <label>2</label>
    </ligand>
</feature>
<feature type="binding site" evidence="1">
    <location>
        <position position="114"/>
    </location>
    <ligand>
        <name>Mn(2+)</name>
        <dbReference type="ChEBI" id="CHEBI:29035"/>
        <label>2</label>
    </ligand>
</feature>
<feature type="binding site" evidence="1">
    <location>
        <position position="122"/>
    </location>
    <ligand>
        <name>substrate</name>
    </ligand>
</feature>
<feature type="binding site" evidence="1">
    <location>
        <position position="160"/>
    </location>
    <ligand>
        <name>substrate</name>
    </ligand>
</feature>
<feature type="binding site" evidence="1">
    <location>
        <position position="164"/>
    </location>
    <ligand>
        <name>substrate</name>
    </ligand>
</feature>
<feature type="binding site" evidence="1">
    <location>
        <position position="167"/>
    </location>
    <ligand>
        <name>substrate</name>
    </ligand>
</feature>
<feature type="binding site" evidence="1">
    <location>
        <position position="195"/>
    </location>
    <ligand>
        <name>Mn(2+)</name>
        <dbReference type="ChEBI" id="CHEBI:29035"/>
        <label>2</label>
    </ligand>
</feature>
<feature type="binding site" evidence="1">
    <location>
        <position position="195"/>
    </location>
    <ligand>
        <name>substrate</name>
    </ligand>
</feature>
<feature type="binding site" evidence="1">
    <location>
        <position position="197"/>
    </location>
    <ligand>
        <name>Mn(2+)</name>
        <dbReference type="ChEBI" id="CHEBI:29035"/>
        <label>1</label>
    </ligand>
</feature>
<dbReference type="EC" id="3.6.1.54" evidence="1"/>
<dbReference type="EMBL" id="CP000934">
    <property type="protein sequence ID" value="ACE84870.1"/>
    <property type="molecule type" value="Genomic_DNA"/>
</dbReference>
<dbReference type="RefSeq" id="WP_012487604.1">
    <property type="nucleotide sequence ID" value="NC_010995.1"/>
</dbReference>
<dbReference type="SMR" id="B3PHJ5"/>
<dbReference type="STRING" id="498211.CJA_1995"/>
<dbReference type="KEGG" id="cja:CJA_1995"/>
<dbReference type="eggNOG" id="COG2908">
    <property type="taxonomic scope" value="Bacteria"/>
</dbReference>
<dbReference type="HOGENOM" id="CLU_074586_0_0_6"/>
<dbReference type="OrthoDB" id="9783283at2"/>
<dbReference type="UniPathway" id="UPA00359">
    <property type="reaction ID" value="UER00480"/>
</dbReference>
<dbReference type="Proteomes" id="UP000001036">
    <property type="component" value="Chromosome"/>
</dbReference>
<dbReference type="GO" id="GO:0005737">
    <property type="term" value="C:cytoplasm"/>
    <property type="evidence" value="ECO:0007669"/>
    <property type="project" value="InterPro"/>
</dbReference>
<dbReference type="GO" id="GO:0019897">
    <property type="term" value="C:extrinsic component of plasma membrane"/>
    <property type="evidence" value="ECO:0007669"/>
    <property type="project" value="UniProtKB-UniRule"/>
</dbReference>
<dbReference type="GO" id="GO:0030145">
    <property type="term" value="F:manganese ion binding"/>
    <property type="evidence" value="ECO:0007669"/>
    <property type="project" value="UniProtKB-UniRule"/>
</dbReference>
<dbReference type="GO" id="GO:0008758">
    <property type="term" value="F:UDP-2,3-diacylglucosamine hydrolase activity"/>
    <property type="evidence" value="ECO:0007669"/>
    <property type="project" value="UniProtKB-UniRule"/>
</dbReference>
<dbReference type="GO" id="GO:0009245">
    <property type="term" value="P:lipid A biosynthetic process"/>
    <property type="evidence" value="ECO:0007669"/>
    <property type="project" value="UniProtKB-UniRule"/>
</dbReference>
<dbReference type="CDD" id="cd07398">
    <property type="entry name" value="MPP_YbbF-LpxH"/>
    <property type="match status" value="1"/>
</dbReference>
<dbReference type="Gene3D" id="3.60.21.10">
    <property type="match status" value="1"/>
</dbReference>
<dbReference type="HAMAP" id="MF_00575">
    <property type="entry name" value="LpxH"/>
    <property type="match status" value="1"/>
</dbReference>
<dbReference type="InterPro" id="IPR004843">
    <property type="entry name" value="Calcineurin-like_PHP_ApaH"/>
</dbReference>
<dbReference type="InterPro" id="IPR043461">
    <property type="entry name" value="LpxH-like"/>
</dbReference>
<dbReference type="InterPro" id="IPR029052">
    <property type="entry name" value="Metallo-depent_PP-like"/>
</dbReference>
<dbReference type="InterPro" id="IPR010138">
    <property type="entry name" value="UDP-diacylglucosamine_Hdrlase"/>
</dbReference>
<dbReference type="NCBIfam" id="TIGR01854">
    <property type="entry name" value="lipid_A_lpxH"/>
    <property type="match status" value="1"/>
</dbReference>
<dbReference type="NCBIfam" id="NF003743">
    <property type="entry name" value="PRK05340.1"/>
    <property type="match status" value="1"/>
</dbReference>
<dbReference type="PANTHER" id="PTHR34990:SF1">
    <property type="entry name" value="UDP-2,3-DIACYLGLUCOSAMINE HYDROLASE"/>
    <property type="match status" value="1"/>
</dbReference>
<dbReference type="PANTHER" id="PTHR34990">
    <property type="entry name" value="UDP-2,3-DIACYLGLUCOSAMINE HYDROLASE-RELATED"/>
    <property type="match status" value="1"/>
</dbReference>
<dbReference type="Pfam" id="PF00149">
    <property type="entry name" value="Metallophos"/>
    <property type="match status" value="1"/>
</dbReference>
<dbReference type="SUPFAM" id="SSF56300">
    <property type="entry name" value="Metallo-dependent phosphatases"/>
    <property type="match status" value="1"/>
</dbReference>
<gene>
    <name evidence="1" type="primary">lpxH</name>
    <name type="ordered locus">CJA_1995</name>
</gene>